<evidence type="ECO:0000255" key="1">
    <source>
        <dbReference type="HAMAP-Rule" id="MF_00344"/>
    </source>
</evidence>
<organism>
    <name type="scientific">Prochlorococcus marinus (strain MIT 9215)</name>
    <dbReference type="NCBI Taxonomy" id="93060"/>
    <lineage>
        <taxon>Bacteria</taxon>
        <taxon>Bacillati</taxon>
        <taxon>Cyanobacteriota</taxon>
        <taxon>Cyanophyceae</taxon>
        <taxon>Synechococcales</taxon>
        <taxon>Prochlorococcaceae</taxon>
        <taxon>Prochlorococcus</taxon>
    </lineage>
</organism>
<proteinExistence type="inferred from homology"/>
<feature type="chain" id="PRO_1000120359" description="GMP synthase [glutamine-hydrolyzing]">
    <location>
        <begin position="1"/>
        <end position="528"/>
    </location>
</feature>
<feature type="domain" description="Glutamine amidotransferase type-1" evidence="1">
    <location>
        <begin position="13"/>
        <end position="204"/>
    </location>
</feature>
<feature type="domain" description="GMPS ATP-PPase" evidence="1">
    <location>
        <begin position="205"/>
        <end position="403"/>
    </location>
</feature>
<feature type="active site" description="Nucleophile" evidence="1">
    <location>
        <position position="90"/>
    </location>
</feature>
<feature type="active site" evidence="1">
    <location>
        <position position="178"/>
    </location>
</feature>
<feature type="active site" evidence="1">
    <location>
        <position position="180"/>
    </location>
</feature>
<feature type="binding site" evidence="1">
    <location>
        <begin position="232"/>
        <end position="238"/>
    </location>
    <ligand>
        <name>ATP</name>
        <dbReference type="ChEBI" id="CHEBI:30616"/>
    </ligand>
</feature>
<reference key="1">
    <citation type="journal article" date="2007" name="PLoS Genet.">
        <title>Patterns and implications of gene gain and loss in the evolution of Prochlorococcus.</title>
        <authorList>
            <person name="Kettler G.C."/>
            <person name="Martiny A.C."/>
            <person name="Huang K."/>
            <person name="Zucker J."/>
            <person name="Coleman M.L."/>
            <person name="Rodrigue S."/>
            <person name="Chen F."/>
            <person name="Lapidus A."/>
            <person name="Ferriera S."/>
            <person name="Johnson J."/>
            <person name="Steglich C."/>
            <person name="Church G.M."/>
            <person name="Richardson P."/>
            <person name="Chisholm S.W."/>
        </authorList>
    </citation>
    <scope>NUCLEOTIDE SEQUENCE [LARGE SCALE GENOMIC DNA]</scope>
    <source>
        <strain>MIT 9215</strain>
    </source>
</reference>
<sequence length="528" mass="59428">MSQTSLKKERDPSILILDFGSQYSELIARRIRETNVFSLVVSNCISIKEINNINPKGIILSGGPNSVYEQNAPKCDEKIFNLGIPILGICYGMQLMVKELGGSVIPATKKAEYGRAPINIDQESDLLSDVQDKSIMWMSHGDSIKCLPVGFNKIAHTENTLHAAISNDLKKLFGVQFHPEVIHSEYGMTVIKNFVYKISCCAADWTTETYIEETIPRIREQVGNKKVLLALSGGVDSSTLAFLLNKAIGNQLTCMFIDQGFMRKGEPEFLMNFFDKKFHIKVEYINARKRFISKLKGITEPEQKRKIIGEEFIRVFEEESNRLGPFQYLAQGTLYPDVIESAGTNIDPKTGERIAVKIKSHHNVGGLPKDLQFKLVEPLRKLFKDEVRQVGAALGLPAEIIKRHPFPGPGLAIRILGEVNNEKLDCLRDADWIVRDEIKKAGLYNEIWQAFAVLLPVKTVGVMGDKRTYAWPIVLRCVSSEDGMTADWSKIPFKILERIANRIVNEVISVNRVVYDITSKPPGTIEWE</sequence>
<keyword id="KW-0067">ATP-binding</keyword>
<keyword id="KW-0315">Glutamine amidotransferase</keyword>
<keyword id="KW-0332">GMP biosynthesis</keyword>
<keyword id="KW-0436">Ligase</keyword>
<keyword id="KW-0547">Nucleotide-binding</keyword>
<keyword id="KW-0658">Purine biosynthesis</keyword>
<name>GUAA_PROM2</name>
<protein>
    <recommendedName>
        <fullName evidence="1">GMP synthase [glutamine-hydrolyzing]</fullName>
        <ecNumber evidence="1">6.3.5.2</ecNumber>
    </recommendedName>
    <alternativeName>
        <fullName evidence="1">GMP synthetase</fullName>
    </alternativeName>
    <alternativeName>
        <fullName evidence="1">Glutamine amidotransferase</fullName>
    </alternativeName>
</protein>
<gene>
    <name evidence="1" type="primary">guaA</name>
    <name type="ordered locus">P9215_00351</name>
</gene>
<comment type="function">
    <text evidence="1">Catalyzes the synthesis of GMP from XMP.</text>
</comment>
<comment type="catalytic activity">
    <reaction evidence="1">
        <text>XMP + L-glutamine + ATP + H2O = GMP + L-glutamate + AMP + diphosphate + 2 H(+)</text>
        <dbReference type="Rhea" id="RHEA:11680"/>
        <dbReference type="ChEBI" id="CHEBI:15377"/>
        <dbReference type="ChEBI" id="CHEBI:15378"/>
        <dbReference type="ChEBI" id="CHEBI:29985"/>
        <dbReference type="ChEBI" id="CHEBI:30616"/>
        <dbReference type="ChEBI" id="CHEBI:33019"/>
        <dbReference type="ChEBI" id="CHEBI:57464"/>
        <dbReference type="ChEBI" id="CHEBI:58115"/>
        <dbReference type="ChEBI" id="CHEBI:58359"/>
        <dbReference type="ChEBI" id="CHEBI:456215"/>
        <dbReference type="EC" id="6.3.5.2"/>
    </reaction>
</comment>
<comment type="pathway">
    <text evidence="1">Purine metabolism; GMP biosynthesis; GMP from XMP (L-Gln route): step 1/1.</text>
</comment>
<comment type="subunit">
    <text evidence="1">Homodimer.</text>
</comment>
<accession>A8G223</accession>
<dbReference type="EC" id="6.3.5.2" evidence="1"/>
<dbReference type="EMBL" id="CP000825">
    <property type="protein sequence ID" value="ABV49654.1"/>
    <property type="molecule type" value="Genomic_DNA"/>
</dbReference>
<dbReference type="RefSeq" id="WP_012006839.1">
    <property type="nucleotide sequence ID" value="NC_009840.1"/>
</dbReference>
<dbReference type="SMR" id="A8G223"/>
<dbReference type="STRING" id="93060.P9215_00351"/>
<dbReference type="KEGG" id="pmh:P9215_00351"/>
<dbReference type="eggNOG" id="COG0519">
    <property type="taxonomic scope" value="Bacteria"/>
</dbReference>
<dbReference type="HOGENOM" id="CLU_014340_0_5_3"/>
<dbReference type="OrthoDB" id="9802219at2"/>
<dbReference type="UniPathway" id="UPA00189">
    <property type="reaction ID" value="UER00296"/>
</dbReference>
<dbReference type="Proteomes" id="UP000002014">
    <property type="component" value="Chromosome"/>
</dbReference>
<dbReference type="GO" id="GO:0005829">
    <property type="term" value="C:cytosol"/>
    <property type="evidence" value="ECO:0007669"/>
    <property type="project" value="TreeGrafter"/>
</dbReference>
<dbReference type="GO" id="GO:0005524">
    <property type="term" value="F:ATP binding"/>
    <property type="evidence" value="ECO:0007669"/>
    <property type="project" value="UniProtKB-UniRule"/>
</dbReference>
<dbReference type="GO" id="GO:0003921">
    <property type="term" value="F:GMP synthase activity"/>
    <property type="evidence" value="ECO:0007669"/>
    <property type="project" value="InterPro"/>
</dbReference>
<dbReference type="CDD" id="cd01742">
    <property type="entry name" value="GATase1_GMP_Synthase"/>
    <property type="match status" value="1"/>
</dbReference>
<dbReference type="CDD" id="cd01997">
    <property type="entry name" value="GMP_synthase_C"/>
    <property type="match status" value="1"/>
</dbReference>
<dbReference type="FunFam" id="3.30.300.10:FF:000002">
    <property type="entry name" value="GMP synthase [glutamine-hydrolyzing]"/>
    <property type="match status" value="1"/>
</dbReference>
<dbReference type="FunFam" id="3.40.50.620:FF:000001">
    <property type="entry name" value="GMP synthase [glutamine-hydrolyzing]"/>
    <property type="match status" value="1"/>
</dbReference>
<dbReference type="FunFam" id="3.40.50.880:FF:000001">
    <property type="entry name" value="GMP synthase [glutamine-hydrolyzing]"/>
    <property type="match status" value="1"/>
</dbReference>
<dbReference type="Gene3D" id="3.30.300.10">
    <property type="match status" value="1"/>
</dbReference>
<dbReference type="Gene3D" id="3.40.50.880">
    <property type="match status" value="1"/>
</dbReference>
<dbReference type="Gene3D" id="3.40.50.620">
    <property type="entry name" value="HUPs"/>
    <property type="match status" value="1"/>
</dbReference>
<dbReference type="HAMAP" id="MF_00344">
    <property type="entry name" value="GMP_synthase"/>
    <property type="match status" value="1"/>
</dbReference>
<dbReference type="InterPro" id="IPR029062">
    <property type="entry name" value="Class_I_gatase-like"/>
</dbReference>
<dbReference type="InterPro" id="IPR017926">
    <property type="entry name" value="GATASE"/>
</dbReference>
<dbReference type="InterPro" id="IPR001674">
    <property type="entry name" value="GMP_synth_C"/>
</dbReference>
<dbReference type="InterPro" id="IPR004739">
    <property type="entry name" value="GMP_synth_GATase"/>
</dbReference>
<dbReference type="InterPro" id="IPR022955">
    <property type="entry name" value="GMP_synthase"/>
</dbReference>
<dbReference type="InterPro" id="IPR025777">
    <property type="entry name" value="GMPS_ATP_PPase_dom"/>
</dbReference>
<dbReference type="InterPro" id="IPR022310">
    <property type="entry name" value="NAD/GMP_synthase"/>
</dbReference>
<dbReference type="InterPro" id="IPR014729">
    <property type="entry name" value="Rossmann-like_a/b/a_fold"/>
</dbReference>
<dbReference type="NCBIfam" id="TIGR00884">
    <property type="entry name" value="guaA_Cterm"/>
    <property type="match status" value="1"/>
</dbReference>
<dbReference type="NCBIfam" id="TIGR00888">
    <property type="entry name" value="guaA_Nterm"/>
    <property type="match status" value="1"/>
</dbReference>
<dbReference type="NCBIfam" id="NF000848">
    <property type="entry name" value="PRK00074.1"/>
    <property type="match status" value="1"/>
</dbReference>
<dbReference type="PANTHER" id="PTHR11922:SF2">
    <property type="entry name" value="GMP SYNTHASE [GLUTAMINE-HYDROLYZING]"/>
    <property type="match status" value="1"/>
</dbReference>
<dbReference type="PANTHER" id="PTHR11922">
    <property type="entry name" value="GMP SYNTHASE-RELATED"/>
    <property type="match status" value="1"/>
</dbReference>
<dbReference type="Pfam" id="PF00117">
    <property type="entry name" value="GATase"/>
    <property type="match status" value="1"/>
</dbReference>
<dbReference type="Pfam" id="PF00958">
    <property type="entry name" value="GMP_synt_C"/>
    <property type="match status" value="1"/>
</dbReference>
<dbReference type="Pfam" id="PF02540">
    <property type="entry name" value="NAD_synthase"/>
    <property type="match status" value="1"/>
</dbReference>
<dbReference type="PRINTS" id="PR00097">
    <property type="entry name" value="ANTSNTHASEII"/>
</dbReference>
<dbReference type="PRINTS" id="PR00099">
    <property type="entry name" value="CPSGATASE"/>
</dbReference>
<dbReference type="PRINTS" id="PR00096">
    <property type="entry name" value="GATASE"/>
</dbReference>
<dbReference type="SUPFAM" id="SSF52402">
    <property type="entry name" value="Adenine nucleotide alpha hydrolases-like"/>
    <property type="match status" value="1"/>
</dbReference>
<dbReference type="SUPFAM" id="SSF52317">
    <property type="entry name" value="Class I glutamine amidotransferase-like"/>
    <property type="match status" value="1"/>
</dbReference>
<dbReference type="SUPFAM" id="SSF54810">
    <property type="entry name" value="GMP synthetase C-terminal dimerisation domain"/>
    <property type="match status" value="1"/>
</dbReference>
<dbReference type="PROSITE" id="PS51273">
    <property type="entry name" value="GATASE_TYPE_1"/>
    <property type="match status" value="1"/>
</dbReference>
<dbReference type="PROSITE" id="PS51553">
    <property type="entry name" value="GMPS_ATP_PPASE"/>
    <property type="match status" value="1"/>
</dbReference>